<proteinExistence type="evidence at protein level"/>
<organism>
    <name type="scientific">Escherichia coli (strain K12)</name>
    <dbReference type="NCBI Taxonomy" id="83333"/>
    <lineage>
        <taxon>Bacteria</taxon>
        <taxon>Pseudomonadati</taxon>
        <taxon>Pseudomonadota</taxon>
        <taxon>Gammaproteobacteria</taxon>
        <taxon>Enterobacterales</taxon>
        <taxon>Enterobacteriaceae</taxon>
        <taxon>Escherichia</taxon>
    </lineage>
</organism>
<accession>P0AE85</accession>
<accession>O65939</accession>
<accession>P32158</accession>
<accession>Q2M8L0</accession>
<sequence length="166" mass="18965">MRIVTAAVMASTLAVSSLSHAAEVGSGDNWHPGEELTQRSTQSHMFDGISLTEHQRQQMRDLMQQARHEQPPVNVSELETMHRLVTAENFDENAVRAQAEKMANEQIARQVEMAKVRNQMYRLLTPEQQAVLNEKHQQRMEQLRDVTQWQKSSSLKLLSSSNSRSQ</sequence>
<protein>
    <recommendedName>
        <fullName evidence="14">Periplasmic protein CpxP</fullName>
    </recommendedName>
    <alternativeName>
        <fullName evidence="13">ORF_o167</fullName>
    </alternativeName>
    <alternativeName>
        <fullName>Periplasmic accessory protein CpxP</fullName>
    </alternativeName>
</protein>
<gene>
    <name evidence="14" type="primary">cpxP</name>
    <name type="synonym">yiiO</name>
    <name type="ordered locus">b4484</name>
    <name type="ordered locus">JW5558</name>
</gene>
<keyword id="KW-0002">3D-structure</keyword>
<keyword id="KW-0574">Periplasm</keyword>
<keyword id="KW-1185">Reference proteome</keyword>
<keyword id="KW-0732">Signal</keyword>
<keyword id="KW-0346">Stress response</keyword>
<reference key="1">
    <citation type="journal article" date="1993" name="Nucleic Acids Res.">
        <title>Analysis of the Escherichia coli genome. III. DNA sequence of the region from 87.2 to 89.2 minutes.</title>
        <authorList>
            <person name="Plunkett G. III"/>
            <person name="Burland V."/>
            <person name="Daniels D.L."/>
            <person name="Blattner F.R."/>
        </authorList>
    </citation>
    <scope>NUCLEOTIDE SEQUENCE [LARGE SCALE GENOMIC DNA]</scope>
    <source>
        <strain>K12 / MG1655 / ATCC 47076</strain>
    </source>
</reference>
<reference key="2">
    <citation type="journal article" date="1997" name="Science">
        <title>The complete genome sequence of Escherichia coli K-12.</title>
        <authorList>
            <person name="Blattner F.R."/>
            <person name="Plunkett G. III"/>
            <person name="Bloch C.A."/>
            <person name="Perna N.T."/>
            <person name="Burland V."/>
            <person name="Riley M."/>
            <person name="Collado-Vides J."/>
            <person name="Glasner J.D."/>
            <person name="Rode C.K."/>
            <person name="Mayhew G.F."/>
            <person name="Gregor J."/>
            <person name="Davis N.W."/>
            <person name="Kirkpatrick H.A."/>
            <person name="Goeden M.A."/>
            <person name="Rose D.J."/>
            <person name="Mau B."/>
            <person name="Shao Y."/>
        </authorList>
    </citation>
    <scope>NUCLEOTIDE SEQUENCE [LARGE SCALE GENOMIC DNA]</scope>
    <source>
        <strain>K12 / MG1655 / ATCC 47076</strain>
    </source>
</reference>
<reference key="3">
    <citation type="journal article" date="2006" name="Nucleic Acids Res.">
        <title>Escherichia coli K-12: a cooperatively developed annotation snapshot -- 2005.</title>
        <authorList>
            <person name="Riley M."/>
            <person name="Abe T."/>
            <person name="Arnaud M.B."/>
            <person name="Berlyn M.K.B."/>
            <person name="Blattner F.R."/>
            <person name="Chaudhuri R.R."/>
            <person name="Glasner J.D."/>
            <person name="Horiuchi T."/>
            <person name="Keseler I.M."/>
            <person name="Kosuge T."/>
            <person name="Mori H."/>
            <person name="Perna N.T."/>
            <person name="Plunkett G. III"/>
            <person name="Rudd K.E."/>
            <person name="Serres M.H."/>
            <person name="Thomas G.H."/>
            <person name="Thomson N.R."/>
            <person name="Wishart D."/>
            <person name="Wanner B.L."/>
        </authorList>
    </citation>
    <scope>SEQUENCE REVISION</scope>
</reference>
<reference key="4">
    <citation type="journal article" date="2006" name="Mol. Syst. Biol.">
        <title>Highly accurate genome sequences of Escherichia coli K-12 strains MG1655 and W3110.</title>
        <authorList>
            <person name="Hayashi K."/>
            <person name="Morooka N."/>
            <person name="Yamamoto Y."/>
            <person name="Fujita K."/>
            <person name="Isono K."/>
            <person name="Choi S."/>
            <person name="Ohtsubo E."/>
            <person name="Baba T."/>
            <person name="Wanner B.L."/>
            <person name="Mori H."/>
            <person name="Horiuchi T."/>
        </authorList>
    </citation>
    <scope>NUCLEOTIDE SEQUENCE [LARGE SCALE GENOMIC DNA]</scope>
    <source>
        <strain>K12 / W3110 / ATCC 27325 / DSM 5911</strain>
    </source>
</reference>
<reference key="5">
    <citation type="journal article" date="1997" name="EMBO J.">
        <title>The chaperone-assisted membrane release and folding pathway is sensed by two signal transduction systems.</title>
        <authorList>
            <person name="Jones C.H."/>
            <person name="Danese P.N."/>
            <person name="Pinkner J.S."/>
            <person name="Silhavy T.J."/>
            <person name="Hultgren S.J."/>
        </authorList>
    </citation>
    <scope>INDUCTION</scope>
</reference>
<reference key="6">
    <citation type="journal article" date="1998" name="J. Bacteriol.">
        <title>CpxP, a stress-combative member of the Cpx regulon.</title>
        <authorList>
            <person name="Danese P.N."/>
            <person name="Silhavy T.J."/>
        </authorList>
    </citation>
    <scope>FUNCTION</scope>
    <scope>SUBCELLULAR LOCATION</scope>
    <scope>INDUCTION</scope>
    <scope>DISRUPTION PHENOTYPE</scope>
    <source>
        <strain>K12 / MC4100</strain>
    </source>
</reference>
<reference key="7">
    <citation type="journal article" date="2000" name="Mol. Microbiol.">
        <title>Tethering of CpxP to the inner membrane prevents spheroplast induction of the cpx envelope stress response.</title>
        <authorList>
            <person name="Raivio T.L."/>
            <person name="Laird M.W."/>
            <person name="Joly J.C."/>
            <person name="Silhavy T.J."/>
        </authorList>
    </citation>
    <scope>INDUCTION</scope>
    <source>
        <strain>K12 / MC4100</strain>
    </source>
</reference>
<reference key="8">
    <citation type="journal article" date="2005" name="J. Bacteriol.">
        <title>Cpx signal transduction is influenced by a conserved N-terminal domain in the novel inhibitor CpxP and the periplasmic protease DegP.</title>
        <authorList>
            <person name="Buelow D.R."/>
            <person name="Raivio T.L."/>
        </authorList>
    </citation>
    <scope>FUNCTION</scope>
    <scope>SUBUNIT</scope>
    <scope>INDUCTION BY ALKALI</scope>
    <scope>DOMAIN</scope>
    <scope>DEGRADATION BY DEGP</scope>
    <scope>MUTAGENESIS OF GLN-55; MET-59; ARG-60; ASP-61 AND GLN-128</scope>
    <source>
        <strain>K12 / MC4100</strain>
    </source>
</reference>
<reference key="9">
    <citation type="journal article" date="2005" name="Proc. Natl. Acad. Sci. U.S.A.">
        <title>The extracytoplasmic adaptor protein CpxP is degraded with substrate by DegP.</title>
        <authorList>
            <person name="Isaac D.D."/>
            <person name="Pinkner J.S."/>
            <person name="Hultgren S.J."/>
            <person name="Silhavy T.J."/>
        </authorList>
    </citation>
    <scope>FUNCTION</scope>
    <scope>DEGRADATION BY DEGP</scope>
    <scope>DISRUPTION PHENOTYPE</scope>
    <source>
        <strain>K12 / MC4100</strain>
    </source>
</reference>
<reference key="10">
    <citation type="journal article" date="2006" name="BMC Microbiol.">
        <title>Persisters: a distinct physiological state of E. coli.</title>
        <authorList>
            <person name="Shah D."/>
            <person name="Zhang Z."/>
            <person name="Khodursky A."/>
            <person name="Kaldalu N."/>
            <person name="Kurg K."/>
            <person name="Lewis K."/>
        </authorList>
    </citation>
    <scope>INDUCTION IN PERSISTER CELLS</scope>
    <source>
        <strain>K12</strain>
    </source>
</reference>
<reference key="11">
    <citation type="journal article" date="2007" name="J. Biol. Chem.">
        <title>Purification, reconstitution, and characterization of the CpxRAP envelope stress system of Escherichia coli.</title>
        <authorList>
            <person name="Fleischer R."/>
            <person name="Heermann R."/>
            <person name="Jung K."/>
            <person name="Hunke S."/>
        </authorList>
    </citation>
    <scope>FUNCTION</scope>
</reference>
<reference key="12">
    <citation type="journal article" date="2011" name="Nat. Struct. Mol. Biol.">
        <title>Genetic selection designed to stabilize proteins uncovers a chaperone called Spy.</title>
        <authorList>
            <person name="Quan S."/>
            <person name="Koldewey P."/>
            <person name="Tapley T."/>
            <person name="Kirsch N."/>
            <person name="Ruane K.M."/>
            <person name="Pfizenmaier J."/>
            <person name="Shi R."/>
            <person name="Hofmann S."/>
            <person name="Foit L."/>
            <person name="Ren G."/>
            <person name="Jakob U."/>
            <person name="Xu Z."/>
            <person name="Cygler M."/>
            <person name="Bardwell J.C."/>
        </authorList>
    </citation>
    <scope>FUNCTION</scope>
    <source>
        <strain>K12 / MG1655 / ATCC 47076</strain>
    </source>
</reference>
<reference key="13">
    <citation type="journal article" date="2014" name="PLoS ONE">
        <title>Dynamic interaction between the CpxA sensor kinase and the periplasmic accessory protein CpxP mediates signal recognition in E. coli.</title>
        <authorList>
            <person name="Tschauner K."/>
            <person name="Hoernschemeyer P."/>
            <person name="Mueller V.S."/>
            <person name="Hunke S."/>
        </authorList>
    </citation>
    <scope>FUNCTION</scope>
    <scope>INTERACTION WITH CPXA AND PAPE</scope>
    <scope>SUBUNIT</scope>
    <scope>SUBCELLULAR LOCATION</scope>
    <scope>MUTAGENESIS OF ARG-56 AND ALA-108</scope>
    <source>
        <strain>K12 / MG1655 / ATCC 47076</strain>
    </source>
</reference>
<reference key="14">
    <citation type="journal article" date="2011" name="J. Bacteriol.">
        <title>Structure of the periplasmic stress response protein CpxP.</title>
        <authorList>
            <person name="Thede G.L."/>
            <person name="Arthur D.C."/>
            <person name="Edwards R.A."/>
            <person name="Buelow D.R."/>
            <person name="Wong J.L."/>
            <person name="Raivio T.L."/>
            <person name="Glover J.N."/>
        </authorList>
    </citation>
    <scope>X-RAY CRYSTALLOGRAPHY (2.85 ANGSTROMS) OF 40-151</scope>
    <scope>FUNCTION</scope>
    <scope>SUBUNIT</scope>
    <scope>MUTAGENESIS OF GLN-55 AND GLN-128</scope>
    <source>
        <strain>K12 / MC4100</strain>
    </source>
</reference>
<reference key="15">
    <citation type="journal article" date="2011" name="J. Biol. Chem.">
        <title>Structural basis for two-component system inhibition and pilus sensing by the auxiliary CpxP protein.</title>
        <authorList>
            <person name="Zhou X."/>
            <person name="Keller R."/>
            <person name="Volkmer R."/>
            <person name="Krauss N."/>
            <person name="Scheerer P."/>
            <person name="Hunke S."/>
        </authorList>
    </citation>
    <scope>X-RAY CRYSTALLOGRAPHY (1.45 ANGSTROMS) OF 21-150</scope>
    <scope>FUNCTION</scope>
    <scope>SUBUNIT</scope>
    <scope>DOMAIN</scope>
    <scope>MUTAGENESIS OF ALA-103; ILE-107 AND ALA-108</scope>
</reference>
<comment type="function">
    <text evidence="3 4 6 7 8 9 10 12">Acts as an auxiliary protein in the Cpx two-component envelope stress response system, helping modulate the Cpx response systems response to some inducers (PubMed:16303867, PubMed:25207645). Binds the periplasmic domain of sensor histidine kinase CpxA, inhibiting induction of the Cpx envelope stress response in the absence of inducer; overexpression decreases Cpx pathway activity (PubMed:16166523, PubMed:21317318). Some periplasmic stimulii (shown for P pili subunit PapE and probably 0.3 M NaCl) increase CpxP's susceptibility to DegP, leading to CpxP degradation, inducing the Cpx pathway (PubMed:16166523, PubMed:16303867). Aids in combating extracytoplasmic protein-mediated toxicity (PubMed:16303867, PubMed:21239493, PubMed:9473036). Overexpression leads to degradation by DegP of misfolded P pili subunits in the periplasm (tested using PapE) (PubMed:21239493). Inhibits autophosphorylation of CpxA in reconstituted liposomes by 50% but has no effect on phosphatase activity of CpxA (PubMed:17259177, PubMed:21239493). Has mild protein chaperone activity (PubMed:21239493, PubMed:21317898).</text>
</comment>
<comment type="subunit">
    <text evidence="7 8 10 16">Homodimer; it might alter shape slightly at pH 8.0 when Cpx is induced (PubMed:21239493, PubMed:21317318). Binds the periplasmic sensor domain of CpxA (PubMed:16166523, PubMed:21239493, PubMed:21317318, PubMed:25207645). Interaction with CpxA is not seen in vivo when cells are grown in 0.3 M NaCl, or if the misfolded P pili protein PapE is overexpressed (PubMed:25207645).</text>
</comment>
<comment type="interaction">
    <interactant intactId="EBI-6413881">
        <id>P0AE85</id>
    </interactant>
    <interactant intactId="EBI-6413881">
        <id>P0AE85</id>
        <label>cpxP</label>
    </interactant>
    <organismsDiffer>false</organismsDiffer>
    <experiments>2</experiments>
</comment>
<comment type="subcellular location">
    <subcellularLocation>
        <location evidence="10 12">Periplasm</location>
    </subcellularLocation>
</comment>
<comment type="induction">
    <text evidence="2 3 5 11 12">Induced by envelope stress such as overexpression of misfolded periplasmic proteins (PubMed:9351822). Induced by alkaine pH (tested up to pH 8.4) (PubMed:16166523, PubMed:9473036). Induction is decreased in a degP deletion (PubMed:16166523). Transcription is stimulated by the Cpx two-component signal transduction pathway; sigma factor E (rpoE) is not involved (PubMed:10972835, PubMed:9351822, PubMed:9473036). Transcription induced by spheroplasting, which removes the periplasm and thus this protein; if the protein is anchored to the outer surface of the inner membrane induction does not occur (PubMed:10972835). Induced in persister cells (PubMed:16768798).</text>
</comment>
<comment type="domain">
    <text evidence="3 7">A region in the N-terminus (residues 55-61) probably interacts with the periplasmic sensor domain of CpxA to inhibit its kinase activity and is also important for CpxP stability (PubMed:16166523). The homodimer has an elongated cradle shape; a hydrophobic cleft on the convex face may interact with periplasmic protein PapE (PubMed:21239493).</text>
</comment>
<comment type="PTM">
    <text evidence="3 4">Degraded by DegP; some CpxP mutant proteins are more susceptible to the protease than others (PubMed:16166523). Degradation probably occurs when CpxP is associated with some misfolded proteins; overexpression of PapE leads to DegP-mediated degradation of CpxP and PapE, which requires the N-terminus of PapE. Overexpression of NlpE does not induce this degradation however (PubMed:16303867).</text>
</comment>
<comment type="disruption phenotype">
    <text evidence="4 12">Hypersensitive to alkaline pH (greater than pH 8.8) (PubMed:9473036). Increased accumulation and toxicity of overexpressed, misfolded periplasmic proteins (PubMed:16303867).</text>
</comment>
<comment type="similarity">
    <text evidence="15">Belongs to the CpxP/Spy family.</text>
</comment>
<comment type="sequence caution" evidence="15">
    <conflict type="erroneous initiation">
        <sequence resource="EMBL-CDS" id="AAB03046"/>
    </conflict>
    <text>Extended N-terminus.</text>
</comment>
<dbReference type="EMBL" id="L19201">
    <property type="protein sequence ID" value="AAB03046.1"/>
    <property type="status" value="ALT_INIT"/>
    <property type="molecule type" value="Genomic_DNA"/>
</dbReference>
<dbReference type="EMBL" id="U00096">
    <property type="protein sequence ID" value="AAT48235.1"/>
    <property type="molecule type" value="Genomic_DNA"/>
</dbReference>
<dbReference type="EMBL" id="AP009048">
    <property type="protein sequence ID" value="BAE77396.1"/>
    <property type="molecule type" value="Genomic_DNA"/>
</dbReference>
<dbReference type="RefSeq" id="WP_001223800.1">
    <property type="nucleotide sequence ID" value="NZ_STEB01000017.1"/>
</dbReference>
<dbReference type="RefSeq" id="YP_026277.1">
    <property type="nucleotide sequence ID" value="NC_000913.3"/>
</dbReference>
<dbReference type="PDB" id="3ITF">
    <property type="method" value="X-ray"/>
    <property type="resolution" value="1.45 A"/>
    <property type="chains" value="A/B=21-150"/>
</dbReference>
<dbReference type="PDB" id="3QZC">
    <property type="method" value="X-ray"/>
    <property type="resolution" value="2.85 A"/>
    <property type="chains" value="A/B=40-151"/>
</dbReference>
<dbReference type="PDBsum" id="3ITF"/>
<dbReference type="PDBsum" id="3QZC"/>
<dbReference type="SMR" id="P0AE85"/>
<dbReference type="BioGRID" id="4262646">
    <property type="interactions" value="137"/>
</dbReference>
<dbReference type="DIP" id="DIP-47937N"/>
<dbReference type="FunCoup" id="P0AE85">
    <property type="interactions" value="17"/>
</dbReference>
<dbReference type="IntAct" id="P0AE85">
    <property type="interactions" value="4"/>
</dbReference>
<dbReference type="STRING" id="511145.b4484"/>
<dbReference type="jPOST" id="P0AE85"/>
<dbReference type="PaxDb" id="511145-b4484"/>
<dbReference type="EnsemblBacteria" id="AAT48235">
    <property type="protein sequence ID" value="AAT48235"/>
    <property type="gene ID" value="b4484"/>
</dbReference>
<dbReference type="GeneID" id="2847688"/>
<dbReference type="GeneID" id="93778025"/>
<dbReference type="KEGG" id="ecj:JW5558"/>
<dbReference type="KEGG" id="eco:b4484"/>
<dbReference type="KEGG" id="ecoc:C3026_21160"/>
<dbReference type="PATRIC" id="fig|1411691.4.peg.2791"/>
<dbReference type="EchoBASE" id="EB1818"/>
<dbReference type="eggNOG" id="COG3678">
    <property type="taxonomic scope" value="Bacteria"/>
</dbReference>
<dbReference type="HOGENOM" id="CLU_124352_2_1_6"/>
<dbReference type="InParanoid" id="P0AE85"/>
<dbReference type="OMA" id="RMQECGD"/>
<dbReference type="OrthoDB" id="6505017at2"/>
<dbReference type="PhylomeDB" id="P0AE85"/>
<dbReference type="BioCyc" id="EcoCyc:G7816-MONOMER"/>
<dbReference type="EvolutionaryTrace" id="P0AE85"/>
<dbReference type="PRO" id="PR:P0AE85"/>
<dbReference type="Proteomes" id="UP000000625">
    <property type="component" value="Chromosome"/>
</dbReference>
<dbReference type="GO" id="GO:0030288">
    <property type="term" value="C:outer membrane-bounded periplasmic space"/>
    <property type="evidence" value="ECO:0000314"/>
    <property type="project" value="EcoCyc"/>
</dbReference>
<dbReference type="GO" id="GO:0042802">
    <property type="term" value="F:identical protein binding"/>
    <property type="evidence" value="ECO:0000353"/>
    <property type="project" value="IntAct"/>
</dbReference>
<dbReference type="GO" id="GO:0051082">
    <property type="term" value="F:unfolded protein binding"/>
    <property type="evidence" value="ECO:0000314"/>
    <property type="project" value="EcoCyc"/>
</dbReference>
<dbReference type="GO" id="GO:0030162">
    <property type="term" value="P:regulation of proteolysis"/>
    <property type="evidence" value="ECO:0000269"/>
    <property type="project" value="EcoCyc"/>
</dbReference>
<dbReference type="GO" id="GO:0006950">
    <property type="term" value="P:response to stress"/>
    <property type="evidence" value="ECO:0000314"/>
    <property type="project" value="EcoCyc"/>
</dbReference>
<dbReference type="CDD" id="cd09916">
    <property type="entry name" value="CpxP_like"/>
    <property type="match status" value="1"/>
</dbReference>
<dbReference type="FunFam" id="1.20.120.1490:FF:000001">
    <property type="entry name" value="Cell-envelope stress modulator CpxP"/>
    <property type="match status" value="1"/>
</dbReference>
<dbReference type="Gene3D" id="1.20.120.1490">
    <property type="match status" value="1"/>
</dbReference>
<dbReference type="InterPro" id="IPR052211">
    <property type="entry name" value="Cpx_auxiliary_protein"/>
</dbReference>
<dbReference type="InterPro" id="IPR012899">
    <property type="entry name" value="LTXXQ"/>
</dbReference>
<dbReference type="NCBIfam" id="NF007687">
    <property type="entry name" value="PRK10363.1"/>
    <property type="match status" value="1"/>
</dbReference>
<dbReference type="PANTHER" id="PTHR38102">
    <property type="entry name" value="PERIPLASMIC CHAPERONE SPY"/>
    <property type="match status" value="1"/>
</dbReference>
<dbReference type="PANTHER" id="PTHR38102:SF2">
    <property type="entry name" value="PERIPLASMIC PROTEIN CPXP"/>
    <property type="match status" value="1"/>
</dbReference>
<dbReference type="Pfam" id="PF07813">
    <property type="entry name" value="LTXXQ"/>
    <property type="match status" value="1"/>
</dbReference>
<dbReference type="PIRSF" id="PIRSF034445">
    <property type="entry name" value="CpxP_Spy"/>
    <property type="match status" value="1"/>
</dbReference>
<name>CPXP_ECOLI</name>
<evidence type="ECO:0000255" key="1"/>
<evidence type="ECO:0000269" key="2">
    <source>
    </source>
</evidence>
<evidence type="ECO:0000269" key="3">
    <source>
    </source>
</evidence>
<evidence type="ECO:0000269" key="4">
    <source>
    </source>
</evidence>
<evidence type="ECO:0000269" key="5">
    <source>
    </source>
</evidence>
<evidence type="ECO:0000269" key="6">
    <source>
    </source>
</evidence>
<evidence type="ECO:0000269" key="7">
    <source>
    </source>
</evidence>
<evidence type="ECO:0000269" key="8">
    <source>
    </source>
</evidence>
<evidence type="ECO:0000269" key="9">
    <source>
    </source>
</evidence>
<evidence type="ECO:0000269" key="10">
    <source>
    </source>
</evidence>
<evidence type="ECO:0000269" key="11">
    <source>
    </source>
</evidence>
<evidence type="ECO:0000269" key="12">
    <source>
    </source>
</evidence>
<evidence type="ECO:0000303" key="13">
    <source>
    </source>
</evidence>
<evidence type="ECO:0000303" key="14">
    <source>
    </source>
</evidence>
<evidence type="ECO:0000305" key="15"/>
<evidence type="ECO:0000305" key="16">
    <source>
    </source>
</evidence>
<evidence type="ECO:0007829" key="17">
    <source>
        <dbReference type="PDB" id="3ITF"/>
    </source>
</evidence>
<evidence type="ECO:0007829" key="18">
    <source>
        <dbReference type="PDB" id="3QZC"/>
    </source>
</evidence>
<feature type="signal peptide" evidence="1">
    <location>
        <begin position="1"/>
        <end position="21"/>
    </location>
</feature>
<feature type="chain" id="PRO_0000020992" description="Periplasmic protein CpxP">
    <location>
        <begin position="22"/>
        <end position="166"/>
    </location>
</feature>
<feature type="region of interest" description="Important for protein stability, probably interacts with CpxA" evidence="3">
    <location>
        <begin position="55"/>
        <end position="61"/>
    </location>
</feature>
<feature type="region of interest" description="Not required for activation of CpxA or to induce degradation of misfolded P pili subunits" evidence="7">
    <location>
        <begin position="151"/>
        <end position="166"/>
    </location>
</feature>
<feature type="mutagenesis site" description="No longer inhibits Cpx pathway, protein more susceptible to DegP." evidence="3 8">
    <original>Q</original>
    <variation>P</variation>
    <location>
        <position position="55"/>
    </location>
</feature>
<feature type="mutagenesis site" description="No longer interacts with CpxA." evidence="10">
    <original>R</original>
    <variation>Q</variation>
    <location>
        <position position="56"/>
    </location>
</feature>
<feature type="mutagenesis site" description="No longer inhibits Cpx pathway, protein more susceptible to DegP." evidence="3">
    <original>M</original>
    <variation>T</variation>
    <location>
        <position position="59"/>
    </location>
</feature>
<feature type="mutagenesis site" description="No longer inhibits Cpx pathway." evidence="3">
    <original>R</original>
    <variation>Q</variation>
    <location>
        <position position="60"/>
    </location>
</feature>
<feature type="mutagenesis site" description="No longer inhibits Cpx pathway." evidence="3">
    <original>D</original>
    <variation>E</variation>
    <variation>V</variation>
    <location>
        <position position="61"/>
    </location>
</feature>
<feature type="mutagenesis site" description="Decreased protein stability, significantly reduced degradation of PapE." evidence="7">
    <original>A</original>
    <variation>D</variation>
    <variation>G</variation>
    <location>
        <position position="103"/>
    </location>
</feature>
<feature type="mutagenesis site" description="Decreased protein stability, significantly reduced degradation of PapE." evidence="7">
    <original>I</original>
    <variation>D</variation>
    <location>
        <position position="107"/>
    </location>
</feature>
<feature type="mutagenesis site" description="Decreased protein stability, wild-type degradation of PapE." evidence="7">
    <original>I</original>
    <variation>G</variation>
    <variation>N</variation>
    <location>
        <position position="107"/>
    </location>
</feature>
<feature type="mutagenesis site" description="Decreased protein stability, significantly reduced degradation of PapE." evidence="7">
    <original>A</original>
    <variation>D</variation>
    <location>
        <position position="108"/>
    </location>
</feature>
<feature type="mutagenesis site" description="Decreased protein stability, wild-type degradation of PapE." evidence="7">
    <original>A</original>
    <variation>G</variation>
    <location>
        <position position="108"/>
    </location>
</feature>
<feature type="mutagenesis site" description="Decreased protein stability, significantly reduced degradation of PapE, retains most Cpx inhibition activity." evidence="7 10">
    <original>A</original>
    <variation>V</variation>
    <location>
        <position position="108"/>
    </location>
</feature>
<feature type="mutagenesis site" description="No longer inhibits Cpx pathway in wild-type cells, protein more susceptible to DegP, in the absence of DegP protease partially inhibits Cpx." evidence="3 8">
    <original>Q</original>
    <variation>H</variation>
    <location>
        <position position="128"/>
    </location>
</feature>
<feature type="turn" evidence="17">
    <location>
        <begin position="45"/>
        <end position="48"/>
    </location>
</feature>
<feature type="helix" evidence="17">
    <location>
        <begin position="53"/>
        <end position="69"/>
    </location>
</feature>
<feature type="helix" evidence="17">
    <location>
        <begin position="75"/>
        <end position="85"/>
    </location>
</feature>
<feature type="strand" evidence="18">
    <location>
        <begin position="87"/>
        <end position="89"/>
    </location>
</feature>
<feature type="helix" evidence="17">
    <location>
        <begin position="92"/>
        <end position="121"/>
    </location>
</feature>
<feature type="helix" evidence="17">
    <location>
        <begin position="126"/>
        <end position="142"/>
    </location>
</feature>
<feature type="helix" evidence="17">
    <location>
        <begin position="146"/>
        <end position="149"/>
    </location>
</feature>